<accession>P28453</accession>
<keyword id="KW-0113">Calvin cycle</keyword>
<keyword id="KW-0120">Carbon dioxide fixation</keyword>
<keyword id="KW-0150">Chloroplast</keyword>
<keyword id="KW-1015">Disulfide bond</keyword>
<keyword id="KW-0456">Lyase</keyword>
<keyword id="KW-0460">Magnesium</keyword>
<keyword id="KW-0479">Metal-binding</keyword>
<keyword id="KW-0488">Methylation</keyword>
<keyword id="KW-0503">Monooxygenase</keyword>
<keyword id="KW-0560">Oxidoreductase</keyword>
<keyword id="KW-0601">Photorespiration</keyword>
<keyword id="KW-0602">Photosynthesis</keyword>
<keyword id="KW-0934">Plastid</keyword>
<protein>
    <recommendedName>
        <fullName evidence="1">Ribulose bisphosphate carboxylase large chain</fullName>
        <shortName evidence="1">RuBisCO large subunit</shortName>
        <ecNumber evidence="1">4.1.1.39</ecNumber>
    </recommendedName>
</protein>
<feature type="chain" id="PRO_0000062591" description="Ribulose bisphosphate carboxylase large chain">
    <location>
        <begin position="1" status="less than"/>
        <end position="467"/>
    </location>
</feature>
<feature type="active site" description="Proton acceptor" evidence="1">
    <location>
        <position position="166"/>
    </location>
</feature>
<feature type="active site" description="Proton acceptor" evidence="1">
    <location>
        <position position="285"/>
    </location>
</feature>
<feature type="binding site" description="in homodimeric partner" evidence="1">
    <location>
        <position position="114"/>
    </location>
    <ligand>
        <name>substrate</name>
    </ligand>
</feature>
<feature type="binding site" evidence="1">
    <location>
        <position position="164"/>
    </location>
    <ligand>
        <name>substrate</name>
    </ligand>
</feature>
<feature type="binding site" evidence="1">
    <location>
        <position position="168"/>
    </location>
    <ligand>
        <name>substrate</name>
    </ligand>
</feature>
<feature type="binding site" description="via carbamate group" evidence="1">
    <location>
        <position position="192"/>
    </location>
    <ligand>
        <name>Mg(2+)</name>
        <dbReference type="ChEBI" id="CHEBI:18420"/>
    </ligand>
</feature>
<feature type="binding site" evidence="1">
    <location>
        <position position="194"/>
    </location>
    <ligand>
        <name>Mg(2+)</name>
        <dbReference type="ChEBI" id="CHEBI:18420"/>
    </ligand>
</feature>
<feature type="binding site" evidence="1">
    <location>
        <position position="195"/>
    </location>
    <ligand>
        <name>Mg(2+)</name>
        <dbReference type="ChEBI" id="CHEBI:18420"/>
    </ligand>
</feature>
<feature type="binding site" evidence="1">
    <location>
        <position position="286"/>
    </location>
    <ligand>
        <name>substrate</name>
    </ligand>
</feature>
<feature type="binding site" evidence="1">
    <location>
        <position position="318"/>
    </location>
    <ligand>
        <name>substrate</name>
    </ligand>
</feature>
<feature type="binding site" evidence="1">
    <location>
        <position position="370"/>
    </location>
    <ligand>
        <name>substrate</name>
    </ligand>
</feature>
<feature type="site" description="Transition state stabilizer" evidence="1">
    <location>
        <position position="325"/>
    </location>
</feature>
<feature type="modified residue" description="N6,N6,N6-trimethyllysine" evidence="1">
    <location>
        <position position="5"/>
    </location>
</feature>
<feature type="modified residue" description="N6-carboxylysine" evidence="1">
    <location>
        <position position="192"/>
    </location>
</feature>
<feature type="disulfide bond" description="Interchain; in linked form" evidence="1">
    <location>
        <position position="238"/>
    </location>
</feature>
<feature type="non-terminal residue">
    <location>
        <position position="1"/>
    </location>
</feature>
<comment type="function">
    <text evidence="1">RuBisCO catalyzes two reactions: the carboxylation of D-ribulose 1,5-bisphosphate, the primary event in carbon dioxide fixation, as well as the oxidative fragmentation of the pentose substrate in the photorespiration process. Both reactions occur simultaneously and in competition at the same active site.</text>
</comment>
<comment type="catalytic activity">
    <reaction evidence="1">
        <text>2 (2R)-3-phosphoglycerate + 2 H(+) = D-ribulose 1,5-bisphosphate + CO2 + H2O</text>
        <dbReference type="Rhea" id="RHEA:23124"/>
        <dbReference type="ChEBI" id="CHEBI:15377"/>
        <dbReference type="ChEBI" id="CHEBI:15378"/>
        <dbReference type="ChEBI" id="CHEBI:16526"/>
        <dbReference type="ChEBI" id="CHEBI:57870"/>
        <dbReference type="ChEBI" id="CHEBI:58272"/>
        <dbReference type="EC" id="4.1.1.39"/>
    </reaction>
</comment>
<comment type="catalytic activity">
    <reaction evidence="1">
        <text>D-ribulose 1,5-bisphosphate + O2 = 2-phosphoglycolate + (2R)-3-phosphoglycerate + 2 H(+)</text>
        <dbReference type="Rhea" id="RHEA:36631"/>
        <dbReference type="ChEBI" id="CHEBI:15378"/>
        <dbReference type="ChEBI" id="CHEBI:15379"/>
        <dbReference type="ChEBI" id="CHEBI:57870"/>
        <dbReference type="ChEBI" id="CHEBI:58033"/>
        <dbReference type="ChEBI" id="CHEBI:58272"/>
    </reaction>
</comment>
<comment type="cofactor">
    <cofactor evidence="1">
        <name>Mg(2+)</name>
        <dbReference type="ChEBI" id="CHEBI:18420"/>
    </cofactor>
    <text evidence="1">Binds 1 Mg(2+) ion per subunit.</text>
</comment>
<comment type="subunit">
    <text evidence="1">Heterohexadecamer of 8 large chains and 8 small chains; disulfide-linked. The disulfide link is formed within the large subunit homodimers.</text>
</comment>
<comment type="subcellular location">
    <subcellularLocation>
        <location>Plastid</location>
        <location>Chloroplast</location>
    </subcellularLocation>
</comment>
<comment type="PTM">
    <text evidence="1">The disulfide bond which can form in the large chain dimeric partners within the hexadecamer appears to be associated with oxidative stress and protein turnover.</text>
</comment>
<comment type="miscellaneous">
    <text evidence="1">The basic functional RuBisCO is composed of a large chain homodimer in a 'head-to-tail' conformation. In form I RuBisCO this homodimer is arranged in a barrel-like tetramer with the small subunits forming a tetrameric 'cap' on each end of the 'barrel'.</text>
</comment>
<comment type="similarity">
    <text evidence="1">Belongs to the RuBisCO large chain family. Type I subfamily.</text>
</comment>
<evidence type="ECO:0000255" key="1">
    <source>
        <dbReference type="HAMAP-Rule" id="MF_01338"/>
    </source>
</evidence>
<proteinExistence type="inferred from homology"/>
<dbReference type="EC" id="4.1.1.39" evidence="1"/>
<dbReference type="EMBL" id="L01954">
    <property type="protein sequence ID" value="AAA84653.2"/>
    <property type="molecule type" value="Genomic_DNA"/>
</dbReference>
<dbReference type="GO" id="GO:0009507">
    <property type="term" value="C:chloroplast"/>
    <property type="evidence" value="ECO:0007669"/>
    <property type="project" value="UniProtKB-SubCell"/>
</dbReference>
<dbReference type="GO" id="GO:0000287">
    <property type="term" value="F:magnesium ion binding"/>
    <property type="evidence" value="ECO:0007669"/>
    <property type="project" value="InterPro"/>
</dbReference>
<dbReference type="GO" id="GO:0004497">
    <property type="term" value="F:monooxygenase activity"/>
    <property type="evidence" value="ECO:0007669"/>
    <property type="project" value="UniProtKB-KW"/>
</dbReference>
<dbReference type="GO" id="GO:0016984">
    <property type="term" value="F:ribulose-bisphosphate carboxylase activity"/>
    <property type="evidence" value="ECO:0007669"/>
    <property type="project" value="UniProtKB-EC"/>
</dbReference>
<dbReference type="GO" id="GO:0009853">
    <property type="term" value="P:photorespiration"/>
    <property type="evidence" value="ECO:0007669"/>
    <property type="project" value="UniProtKB-KW"/>
</dbReference>
<dbReference type="GO" id="GO:0019253">
    <property type="term" value="P:reductive pentose-phosphate cycle"/>
    <property type="evidence" value="ECO:0007669"/>
    <property type="project" value="UniProtKB-KW"/>
</dbReference>
<dbReference type="CDD" id="cd08212">
    <property type="entry name" value="RuBisCO_large_I"/>
    <property type="match status" value="1"/>
</dbReference>
<dbReference type="FunFam" id="3.20.20.110:FF:000001">
    <property type="entry name" value="Ribulose bisphosphate carboxylase large chain"/>
    <property type="match status" value="1"/>
</dbReference>
<dbReference type="Gene3D" id="3.20.20.110">
    <property type="entry name" value="Ribulose bisphosphate carboxylase, large subunit, C-terminal domain"/>
    <property type="match status" value="1"/>
</dbReference>
<dbReference type="Gene3D" id="3.30.70.150">
    <property type="entry name" value="RuBisCO large subunit, N-terminal domain"/>
    <property type="match status" value="1"/>
</dbReference>
<dbReference type="HAMAP" id="MF_01338">
    <property type="entry name" value="RuBisCO_L_type1"/>
    <property type="match status" value="1"/>
</dbReference>
<dbReference type="InterPro" id="IPR033966">
    <property type="entry name" value="RuBisCO"/>
</dbReference>
<dbReference type="InterPro" id="IPR020878">
    <property type="entry name" value="RuBisCo_large_chain_AS"/>
</dbReference>
<dbReference type="InterPro" id="IPR000685">
    <property type="entry name" value="RuBisCO_lsu_C"/>
</dbReference>
<dbReference type="InterPro" id="IPR036376">
    <property type="entry name" value="RuBisCO_lsu_C_sf"/>
</dbReference>
<dbReference type="InterPro" id="IPR017443">
    <property type="entry name" value="RuBisCO_lsu_fd_N"/>
</dbReference>
<dbReference type="InterPro" id="IPR036422">
    <property type="entry name" value="RuBisCO_lsu_N_sf"/>
</dbReference>
<dbReference type="InterPro" id="IPR020888">
    <property type="entry name" value="RuBisCO_lsuI"/>
</dbReference>
<dbReference type="NCBIfam" id="NF003252">
    <property type="entry name" value="PRK04208.1"/>
    <property type="match status" value="1"/>
</dbReference>
<dbReference type="PANTHER" id="PTHR42704">
    <property type="entry name" value="RIBULOSE BISPHOSPHATE CARBOXYLASE"/>
    <property type="match status" value="1"/>
</dbReference>
<dbReference type="PANTHER" id="PTHR42704:SF15">
    <property type="entry name" value="RIBULOSE BISPHOSPHATE CARBOXYLASE LARGE CHAIN"/>
    <property type="match status" value="1"/>
</dbReference>
<dbReference type="Pfam" id="PF00016">
    <property type="entry name" value="RuBisCO_large"/>
    <property type="match status" value="1"/>
</dbReference>
<dbReference type="Pfam" id="PF02788">
    <property type="entry name" value="RuBisCO_large_N"/>
    <property type="match status" value="1"/>
</dbReference>
<dbReference type="SFLD" id="SFLDG01052">
    <property type="entry name" value="RuBisCO"/>
    <property type="match status" value="1"/>
</dbReference>
<dbReference type="SFLD" id="SFLDS00014">
    <property type="entry name" value="RuBisCO"/>
    <property type="match status" value="1"/>
</dbReference>
<dbReference type="SFLD" id="SFLDG00301">
    <property type="entry name" value="RuBisCO-like_proteins"/>
    <property type="match status" value="1"/>
</dbReference>
<dbReference type="SUPFAM" id="SSF51649">
    <property type="entry name" value="RuBisCo, C-terminal domain"/>
    <property type="match status" value="1"/>
</dbReference>
<dbReference type="SUPFAM" id="SSF54966">
    <property type="entry name" value="RuBisCO, large subunit, small (N-terminal) domain"/>
    <property type="match status" value="1"/>
</dbReference>
<dbReference type="PROSITE" id="PS00157">
    <property type="entry name" value="RUBISCO_LARGE"/>
    <property type="match status" value="1"/>
</dbReference>
<sequence>SVGFKAGVKEYKLTYYTPXXXAKDTDILAAFXVTPQPGVPPEEAGXXVAAESSTGTWTTVWTDGLTSLDRXKGXCYHIEPVIGEKDQYICYVAYPLDLFEEGSVTNMFTSIVGNVFGFKALRALRLEDLRIPVAYVKTFQGPPHGIQVERDKLNKYGRPLLGCTIKPKLGLSAKNYGRAVYECLRGGLDFTKDDENVNSQPFMRWRDRFLFCAEALYKAQAETGEIKGHYLNATAGTCEEMIKRAVFARELGVPIVMHDYLTGGFTANTSLAHYCRDNGLLLHIHRAMHAVIDRQKNHGMHFRVLRKALRLSGGDHIHSGTVVGKLEGEREITLGFVDLLRDDFIEKDRSRGIYFTQDWVSLPGVIPVASGGIHVWHMPALTEIFGDDSVLQFGGGTLGHPWGNAPGAVANRVALEACVQARNEGRDLAREGNAIIREASKWSPELAAACEVWKEIKFEFAAMDTLD</sequence>
<name>RBL_SCUBO</name>
<reference key="1">
    <citation type="journal article" date="1992" name="Science">
        <title>Carnivorous plants: phylogeny and structural evolution.</title>
        <authorList>
            <person name="Albert V.A."/>
            <person name="Williams S.E."/>
            <person name="Chase M.W."/>
        </authorList>
    </citation>
    <scope>NUCLEOTIDE SEQUENCE [GENOMIC DNA]</scope>
</reference>
<organism>
    <name type="scientific">Scutellaria bolanderi</name>
    <name type="common">Sierra skullcap</name>
    <dbReference type="NCBI Taxonomy" id="54470"/>
    <lineage>
        <taxon>Eukaryota</taxon>
        <taxon>Viridiplantae</taxon>
        <taxon>Streptophyta</taxon>
        <taxon>Embryophyta</taxon>
        <taxon>Tracheophyta</taxon>
        <taxon>Spermatophyta</taxon>
        <taxon>Magnoliopsida</taxon>
        <taxon>eudicotyledons</taxon>
        <taxon>Gunneridae</taxon>
        <taxon>Pentapetalae</taxon>
        <taxon>asterids</taxon>
        <taxon>lamiids</taxon>
        <taxon>Lamiales</taxon>
        <taxon>Lamiaceae</taxon>
        <taxon>Scutellarioideae</taxon>
        <taxon>Scutellaria</taxon>
    </lineage>
</organism>
<geneLocation type="chloroplast"/>
<gene>
    <name evidence="1" type="primary">rbcL</name>
</gene>